<protein>
    <recommendedName>
        <fullName evidence="1">Large ribosomal subunit protein bL25</fullName>
    </recommendedName>
    <alternativeName>
        <fullName evidence="2">50S ribosomal protein L25</fullName>
    </alternativeName>
    <alternativeName>
        <fullName evidence="1">General stress protein CTC</fullName>
    </alternativeName>
</protein>
<sequence>MQIEISANSRKLHGTGANRRLRSQGRLPGVIYGGNGDAQSIELDHKDLYYKLKMEAFHASILSISIDGKKEQVLLRDVQMHPFKQQVLHIDFQRVRQDQKIHVKVPLHFINADIAPGVKLSGGMISHVATEIEISCLPKDLPEFITVDLSGMTAGSTLHLSDLILSENVEIPALLKGDNLPVATLIAKRGEAGESSEE</sequence>
<evidence type="ECO:0000255" key="1">
    <source>
        <dbReference type="HAMAP-Rule" id="MF_01334"/>
    </source>
</evidence>
<evidence type="ECO:0000305" key="2"/>
<dbReference type="EMBL" id="AL954747">
    <property type="protein sequence ID" value="CAD85736.1"/>
    <property type="molecule type" value="Genomic_DNA"/>
</dbReference>
<dbReference type="RefSeq" id="WP_011112367.1">
    <property type="nucleotide sequence ID" value="NC_004757.1"/>
</dbReference>
<dbReference type="SMR" id="Q82TQ5"/>
<dbReference type="STRING" id="228410.NE1825"/>
<dbReference type="GeneID" id="87104983"/>
<dbReference type="KEGG" id="neu:NE1825"/>
<dbReference type="eggNOG" id="COG1825">
    <property type="taxonomic scope" value="Bacteria"/>
</dbReference>
<dbReference type="HOGENOM" id="CLU_075939_0_1_4"/>
<dbReference type="OrthoDB" id="9806411at2"/>
<dbReference type="PhylomeDB" id="Q82TQ5"/>
<dbReference type="Proteomes" id="UP000001416">
    <property type="component" value="Chromosome"/>
</dbReference>
<dbReference type="GO" id="GO:0022625">
    <property type="term" value="C:cytosolic large ribosomal subunit"/>
    <property type="evidence" value="ECO:0007669"/>
    <property type="project" value="TreeGrafter"/>
</dbReference>
<dbReference type="GO" id="GO:0008097">
    <property type="term" value="F:5S rRNA binding"/>
    <property type="evidence" value="ECO:0007669"/>
    <property type="project" value="InterPro"/>
</dbReference>
<dbReference type="GO" id="GO:0003735">
    <property type="term" value="F:structural constituent of ribosome"/>
    <property type="evidence" value="ECO:0007669"/>
    <property type="project" value="InterPro"/>
</dbReference>
<dbReference type="GO" id="GO:0006412">
    <property type="term" value="P:translation"/>
    <property type="evidence" value="ECO:0007669"/>
    <property type="project" value="UniProtKB-UniRule"/>
</dbReference>
<dbReference type="CDD" id="cd00495">
    <property type="entry name" value="Ribosomal_L25_TL5_CTC"/>
    <property type="match status" value="1"/>
</dbReference>
<dbReference type="Gene3D" id="2.170.120.20">
    <property type="entry name" value="Ribosomal protein L25, beta domain"/>
    <property type="match status" value="1"/>
</dbReference>
<dbReference type="Gene3D" id="2.40.240.10">
    <property type="entry name" value="Ribosomal Protein L25, Chain P"/>
    <property type="match status" value="1"/>
</dbReference>
<dbReference type="HAMAP" id="MF_01336">
    <property type="entry name" value="Ribosomal_bL25"/>
    <property type="match status" value="1"/>
</dbReference>
<dbReference type="HAMAP" id="MF_01334">
    <property type="entry name" value="Ribosomal_bL25_CTC"/>
    <property type="match status" value="1"/>
</dbReference>
<dbReference type="InterPro" id="IPR020056">
    <property type="entry name" value="Rbsml_bL25/Gln-tRNA_synth_N"/>
</dbReference>
<dbReference type="InterPro" id="IPR011035">
    <property type="entry name" value="Ribosomal_bL25/Gln-tRNA_synth"/>
</dbReference>
<dbReference type="InterPro" id="IPR020057">
    <property type="entry name" value="Ribosomal_bL25_b-dom"/>
</dbReference>
<dbReference type="InterPro" id="IPR037121">
    <property type="entry name" value="Ribosomal_bL25_C"/>
</dbReference>
<dbReference type="InterPro" id="IPR001021">
    <property type="entry name" value="Ribosomal_bL25_long"/>
</dbReference>
<dbReference type="InterPro" id="IPR020055">
    <property type="entry name" value="Ribosomal_bL25_short"/>
</dbReference>
<dbReference type="InterPro" id="IPR029751">
    <property type="entry name" value="Ribosomal_L25_dom"/>
</dbReference>
<dbReference type="InterPro" id="IPR020930">
    <property type="entry name" value="Ribosomal_uL5_bac-type"/>
</dbReference>
<dbReference type="NCBIfam" id="TIGR00731">
    <property type="entry name" value="bL25_bact_ctc"/>
    <property type="match status" value="1"/>
</dbReference>
<dbReference type="NCBIfam" id="NF004128">
    <property type="entry name" value="PRK05618.1-2"/>
    <property type="match status" value="1"/>
</dbReference>
<dbReference type="NCBIfam" id="NF004130">
    <property type="entry name" value="PRK05618.1-5"/>
    <property type="match status" value="1"/>
</dbReference>
<dbReference type="NCBIfam" id="NF004612">
    <property type="entry name" value="PRK05943.1"/>
    <property type="match status" value="1"/>
</dbReference>
<dbReference type="PANTHER" id="PTHR33284">
    <property type="entry name" value="RIBOSOMAL PROTEIN L25/GLN-TRNA SYNTHETASE, ANTI-CODON-BINDING DOMAIN-CONTAINING PROTEIN"/>
    <property type="match status" value="1"/>
</dbReference>
<dbReference type="PANTHER" id="PTHR33284:SF1">
    <property type="entry name" value="RIBOSOMAL PROTEIN L25_GLN-TRNA SYNTHETASE, ANTI-CODON-BINDING DOMAIN-CONTAINING PROTEIN"/>
    <property type="match status" value="1"/>
</dbReference>
<dbReference type="Pfam" id="PF01386">
    <property type="entry name" value="Ribosomal_L25p"/>
    <property type="match status" value="1"/>
</dbReference>
<dbReference type="Pfam" id="PF14693">
    <property type="entry name" value="Ribosomal_TL5_C"/>
    <property type="match status" value="1"/>
</dbReference>
<dbReference type="SUPFAM" id="SSF50715">
    <property type="entry name" value="Ribosomal protein L25-like"/>
    <property type="match status" value="1"/>
</dbReference>
<reference key="1">
    <citation type="journal article" date="2003" name="J. Bacteriol.">
        <title>Complete genome sequence of the ammonia-oxidizing bacterium and obligate chemolithoautotroph Nitrosomonas europaea.</title>
        <authorList>
            <person name="Chain P."/>
            <person name="Lamerdin J.E."/>
            <person name="Larimer F.W."/>
            <person name="Regala W."/>
            <person name="Lao V."/>
            <person name="Land M.L."/>
            <person name="Hauser L."/>
            <person name="Hooper A.B."/>
            <person name="Klotz M.G."/>
            <person name="Norton J."/>
            <person name="Sayavedra-Soto L.A."/>
            <person name="Arciero D.M."/>
            <person name="Hommes N.G."/>
            <person name="Whittaker M.M."/>
            <person name="Arp D.J."/>
        </authorList>
    </citation>
    <scope>NUCLEOTIDE SEQUENCE [LARGE SCALE GENOMIC DNA]</scope>
    <source>
        <strain>ATCC 19718 / CIP 103999 / KCTC 2705 / NBRC 14298</strain>
    </source>
</reference>
<feature type="chain" id="PRO_0000181574" description="Large ribosomal subunit protein bL25">
    <location>
        <begin position="1"/>
        <end position="198"/>
    </location>
</feature>
<gene>
    <name evidence="1" type="primary">rplY</name>
    <name evidence="1" type="synonym">ctc</name>
    <name type="ordered locus">NE1825</name>
</gene>
<accession>Q82TQ5</accession>
<keyword id="KW-1185">Reference proteome</keyword>
<keyword id="KW-0687">Ribonucleoprotein</keyword>
<keyword id="KW-0689">Ribosomal protein</keyword>
<keyword id="KW-0694">RNA-binding</keyword>
<keyword id="KW-0699">rRNA-binding</keyword>
<comment type="function">
    <text evidence="1">This is one of the proteins that binds to the 5S RNA in the ribosome where it forms part of the central protuberance.</text>
</comment>
<comment type="subunit">
    <text evidence="1">Part of the 50S ribosomal subunit; part of the 5S rRNA/L5/L18/L25 subcomplex. Contacts the 5S rRNA. Binds to the 5S rRNA independently of L5 and L18.</text>
</comment>
<comment type="similarity">
    <text evidence="1">Belongs to the bacterial ribosomal protein bL25 family. CTC subfamily.</text>
</comment>
<organism>
    <name type="scientific">Nitrosomonas europaea (strain ATCC 19718 / CIP 103999 / KCTC 2705 / NBRC 14298)</name>
    <dbReference type="NCBI Taxonomy" id="228410"/>
    <lineage>
        <taxon>Bacteria</taxon>
        <taxon>Pseudomonadati</taxon>
        <taxon>Pseudomonadota</taxon>
        <taxon>Betaproteobacteria</taxon>
        <taxon>Nitrosomonadales</taxon>
        <taxon>Nitrosomonadaceae</taxon>
        <taxon>Nitrosomonas</taxon>
    </lineage>
</organism>
<name>RL25_NITEU</name>
<proteinExistence type="inferred from homology"/>